<organism>
    <name type="scientific">Borrelia recurrentis (strain A1)</name>
    <dbReference type="NCBI Taxonomy" id="412418"/>
    <lineage>
        <taxon>Bacteria</taxon>
        <taxon>Pseudomonadati</taxon>
        <taxon>Spirochaetota</taxon>
        <taxon>Spirochaetia</taxon>
        <taxon>Spirochaetales</taxon>
        <taxon>Borreliaceae</taxon>
        <taxon>Borrelia</taxon>
    </lineage>
</organism>
<sequence>MKVILREDFINLGKEGDIVDVKDGFARNYLLPKGFAVFSNKHNIDIFSQKKRAILKRQESRRKMAVELKEKLDKVNLEFIMQSNDSGKLFHSINSSNIADELLKLGFEIERRKIDMHHGALKAFGTYNVIIKLYEGISSVITVEIKREEKKNSLKKSKSVKKEV</sequence>
<dbReference type="EMBL" id="CP000993">
    <property type="protein sequence ID" value="ACH94373.1"/>
    <property type="molecule type" value="Genomic_DNA"/>
</dbReference>
<dbReference type="RefSeq" id="WP_012538670.1">
    <property type="nucleotide sequence ID" value="NC_011244.1"/>
</dbReference>
<dbReference type="SMR" id="B5RQT9"/>
<dbReference type="KEGG" id="bre:BRE_114"/>
<dbReference type="HOGENOM" id="CLU_078938_1_2_12"/>
<dbReference type="Proteomes" id="UP000000612">
    <property type="component" value="Chromosome"/>
</dbReference>
<dbReference type="GO" id="GO:1990904">
    <property type="term" value="C:ribonucleoprotein complex"/>
    <property type="evidence" value="ECO:0007669"/>
    <property type="project" value="UniProtKB-KW"/>
</dbReference>
<dbReference type="GO" id="GO:0005840">
    <property type="term" value="C:ribosome"/>
    <property type="evidence" value="ECO:0007669"/>
    <property type="project" value="UniProtKB-KW"/>
</dbReference>
<dbReference type="GO" id="GO:0019843">
    <property type="term" value="F:rRNA binding"/>
    <property type="evidence" value="ECO:0007669"/>
    <property type="project" value="UniProtKB-UniRule"/>
</dbReference>
<dbReference type="GO" id="GO:0003735">
    <property type="term" value="F:structural constituent of ribosome"/>
    <property type="evidence" value="ECO:0007669"/>
    <property type="project" value="InterPro"/>
</dbReference>
<dbReference type="GO" id="GO:0006412">
    <property type="term" value="P:translation"/>
    <property type="evidence" value="ECO:0007669"/>
    <property type="project" value="UniProtKB-UniRule"/>
</dbReference>
<dbReference type="FunFam" id="3.40.5.10:FF:000003">
    <property type="entry name" value="50S ribosomal protein L9"/>
    <property type="match status" value="1"/>
</dbReference>
<dbReference type="Gene3D" id="3.10.430.100">
    <property type="entry name" value="Ribosomal protein L9, C-terminal domain"/>
    <property type="match status" value="1"/>
</dbReference>
<dbReference type="Gene3D" id="3.40.5.10">
    <property type="entry name" value="Ribosomal protein L9, N-terminal domain"/>
    <property type="match status" value="1"/>
</dbReference>
<dbReference type="HAMAP" id="MF_00503">
    <property type="entry name" value="Ribosomal_bL9"/>
    <property type="match status" value="1"/>
</dbReference>
<dbReference type="InterPro" id="IPR000244">
    <property type="entry name" value="Ribosomal_bL9"/>
</dbReference>
<dbReference type="InterPro" id="IPR009027">
    <property type="entry name" value="Ribosomal_bL9/RNase_H1_N"/>
</dbReference>
<dbReference type="InterPro" id="IPR020594">
    <property type="entry name" value="Ribosomal_bL9_bac/chp"/>
</dbReference>
<dbReference type="InterPro" id="IPR020069">
    <property type="entry name" value="Ribosomal_bL9_C"/>
</dbReference>
<dbReference type="InterPro" id="IPR036791">
    <property type="entry name" value="Ribosomal_bL9_C_sf"/>
</dbReference>
<dbReference type="InterPro" id="IPR020070">
    <property type="entry name" value="Ribosomal_bL9_N"/>
</dbReference>
<dbReference type="InterPro" id="IPR036935">
    <property type="entry name" value="Ribosomal_bL9_N_sf"/>
</dbReference>
<dbReference type="NCBIfam" id="TIGR00158">
    <property type="entry name" value="L9"/>
    <property type="match status" value="1"/>
</dbReference>
<dbReference type="PANTHER" id="PTHR21368">
    <property type="entry name" value="50S RIBOSOMAL PROTEIN L9"/>
    <property type="match status" value="1"/>
</dbReference>
<dbReference type="Pfam" id="PF03948">
    <property type="entry name" value="Ribosomal_L9_C"/>
    <property type="match status" value="1"/>
</dbReference>
<dbReference type="Pfam" id="PF01281">
    <property type="entry name" value="Ribosomal_L9_N"/>
    <property type="match status" value="1"/>
</dbReference>
<dbReference type="SUPFAM" id="SSF55658">
    <property type="entry name" value="L9 N-domain-like"/>
    <property type="match status" value="1"/>
</dbReference>
<dbReference type="SUPFAM" id="SSF55653">
    <property type="entry name" value="Ribosomal protein L9 C-domain"/>
    <property type="match status" value="1"/>
</dbReference>
<dbReference type="PROSITE" id="PS00651">
    <property type="entry name" value="RIBOSOMAL_L9"/>
    <property type="match status" value="1"/>
</dbReference>
<accession>B5RQT9</accession>
<feature type="chain" id="PRO_1000126875" description="Large ribosomal subunit protein bL9">
    <location>
        <begin position="1"/>
        <end position="164"/>
    </location>
</feature>
<keyword id="KW-0687">Ribonucleoprotein</keyword>
<keyword id="KW-0689">Ribosomal protein</keyword>
<keyword id="KW-0694">RNA-binding</keyword>
<keyword id="KW-0699">rRNA-binding</keyword>
<evidence type="ECO:0000255" key="1">
    <source>
        <dbReference type="HAMAP-Rule" id="MF_00503"/>
    </source>
</evidence>
<evidence type="ECO:0000305" key="2"/>
<name>RL9_BORRA</name>
<proteinExistence type="inferred from homology"/>
<protein>
    <recommendedName>
        <fullName evidence="1">Large ribosomal subunit protein bL9</fullName>
    </recommendedName>
    <alternativeName>
        <fullName evidence="2">50S ribosomal protein L9</fullName>
    </alternativeName>
</protein>
<comment type="function">
    <text evidence="1">Binds to the 23S rRNA.</text>
</comment>
<comment type="similarity">
    <text evidence="1">Belongs to the bacterial ribosomal protein bL9 family.</text>
</comment>
<gene>
    <name evidence="1" type="primary">rplI</name>
    <name type="ordered locus">BRE_114</name>
</gene>
<reference key="1">
    <citation type="journal article" date="2008" name="PLoS Genet.">
        <title>The genome of Borrelia recurrentis, the agent of deadly louse-borne relapsing fever, is a degraded subset of tick-borne Borrelia duttonii.</title>
        <authorList>
            <person name="Lescot M."/>
            <person name="Audic S."/>
            <person name="Robert C."/>
            <person name="Nguyen T.T."/>
            <person name="Blanc G."/>
            <person name="Cutler S.J."/>
            <person name="Wincker P."/>
            <person name="Couloux A."/>
            <person name="Claverie J.-M."/>
            <person name="Raoult D."/>
            <person name="Drancourt M."/>
        </authorList>
    </citation>
    <scope>NUCLEOTIDE SEQUENCE [LARGE SCALE GENOMIC DNA]</scope>
    <source>
        <strain>A1</strain>
    </source>
</reference>